<sequence length="97" mass="10452">MAAKKTVTKADLVDQVAQATGLKKKDVKAMVDALLAKVEEALANGSKVQLTGFGTFEVRKRKARTGVKPGTKEKIKIPATQYPAFKPGKALKDKVKK</sequence>
<dbReference type="EMBL" id="AP008226">
    <property type="protein sequence ID" value="BAD71172.1"/>
    <property type="molecule type" value="Genomic_DNA"/>
</dbReference>
<dbReference type="RefSeq" id="WP_011173405.1">
    <property type="nucleotide sequence ID" value="NC_006461.1"/>
</dbReference>
<dbReference type="RefSeq" id="YP_144615.1">
    <property type="nucleotide sequence ID" value="NC_006461.1"/>
</dbReference>
<dbReference type="PDB" id="5EKA">
    <property type="method" value="X-ray"/>
    <property type="resolution" value="1.69 A"/>
    <property type="chains" value="A=2-97"/>
</dbReference>
<dbReference type="PDBsum" id="5EKA"/>
<dbReference type="SMR" id="P19436"/>
<dbReference type="EnsemblBacteria" id="BAD71172">
    <property type="protein sequence ID" value="BAD71172"/>
    <property type="gene ID" value="BAD71172"/>
</dbReference>
<dbReference type="GeneID" id="3168737"/>
<dbReference type="KEGG" id="ttj:TTHA1349"/>
<dbReference type="PATRIC" id="fig|300852.9.peg.1326"/>
<dbReference type="eggNOG" id="COG0776">
    <property type="taxonomic scope" value="Bacteria"/>
</dbReference>
<dbReference type="HOGENOM" id="CLU_105066_3_1_0"/>
<dbReference type="Proteomes" id="UP000000532">
    <property type="component" value="Chromosome"/>
</dbReference>
<dbReference type="GO" id="GO:0005829">
    <property type="term" value="C:cytosol"/>
    <property type="evidence" value="ECO:0007669"/>
    <property type="project" value="TreeGrafter"/>
</dbReference>
<dbReference type="GO" id="GO:0003677">
    <property type="term" value="F:DNA binding"/>
    <property type="evidence" value="ECO:0007669"/>
    <property type="project" value="UniProtKB-KW"/>
</dbReference>
<dbReference type="GO" id="GO:0030527">
    <property type="term" value="F:structural constituent of chromatin"/>
    <property type="evidence" value="ECO:0007669"/>
    <property type="project" value="InterPro"/>
</dbReference>
<dbReference type="GO" id="GO:0030261">
    <property type="term" value="P:chromosome condensation"/>
    <property type="evidence" value="ECO:0007669"/>
    <property type="project" value="UniProtKB-KW"/>
</dbReference>
<dbReference type="CDD" id="cd13831">
    <property type="entry name" value="HU"/>
    <property type="match status" value="1"/>
</dbReference>
<dbReference type="Gene3D" id="4.10.520.10">
    <property type="entry name" value="IHF-like DNA-binding proteins"/>
    <property type="match status" value="1"/>
</dbReference>
<dbReference type="InterPro" id="IPR000119">
    <property type="entry name" value="Hist_DNA-bd"/>
</dbReference>
<dbReference type="InterPro" id="IPR020816">
    <property type="entry name" value="Histone-like_DNA-bd_CS"/>
</dbReference>
<dbReference type="InterPro" id="IPR010992">
    <property type="entry name" value="IHF-like_DNA-bd_dom_sf"/>
</dbReference>
<dbReference type="PANTHER" id="PTHR33175">
    <property type="entry name" value="DNA-BINDING PROTEIN HU"/>
    <property type="match status" value="1"/>
</dbReference>
<dbReference type="PANTHER" id="PTHR33175:SF3">
    <property type="entry name" value="DNA-BINDING PROTEIN HU-BETA"/>
    <property type="match status" value="1"/>
</dbReference>
<dbReference type="Pfam" id="PF00216">
    <property type="entry name" value="Bac_DNA_binding"/>
    <property type="match status" value="1"/>
</dbReference>
<dbReference type="PRINTS" id="PR01727">
    <property type="entry name" value="DNABINDINGHU"/>
</dbReference>
<dbReference type="SMART" id="SM00411">
    <property type="entry name" value="BHL"/>
    <property type="match status" value="1"/>
</dbReference>
<dbReference type="SUPFAM" id="SSF47729">
    <property type="entry name" value="IHF-like DNA-binding proteins"/>
    <property type="match status" value="1"/>
</dbReference>
<dbReference type="PROSITE" id="PS00045">
    <property type="entry name" value="HISTONE_LIKE"/>
    <property type="match status" value="1"/>
</dbReference>
<keyword id="KW-0002">3D-structure</keyword>
<keyword id="KW-0903">Direct protein sequencing</keyword>
<keyword id="KW-0226">DNA condensation</keyword>
<keyword id="KW-0238">DNA-binding</keyword>
<keyword id="KW-1185">Reference proteome</keyword>
<protein>
    <recommendedName>
        <fullName>DNA-binding protein HU</fullName>
    </recommendedName>
    <alternativeName>
        <fullName evidence="3">DNA-binding protein II</fullName>
    </alternativeName>
    <alternativeName>
        <fullName evidence="4">TL29</fullName>
    </alternativeName>
</protein>
<organism>
    <name type="scientific">Thermus thermophilus (strain ATCC 27634 / DSM 579 / HB8)</name>
    <dbReference type="NCBI Taxonomy" id="300852"/>
    <lineage>
        <taxon>Bacteria</taxon>
        <taxon>Thermotogati</taxon>
        <taxon>Deinococcota</taxon>
        <taxon>Deinococci</taxon>
        <taxon>Thermales</taxon>
        <taxon>Thermaceae</taxon>
        <taxon>Thermus</taxon>
    </lineage>
</organism>
<evidence type="ECO:0000269" key="1">
    <source>
    </source>
</evidence>
<evidence type="ECO:0000269" key="2">
    <source ref="3"/>
</evidence>
<evidence type="ECO:0000303" key="3">
    <source>
    </source>
</evidence>
<evidence type="ECO:0000303" key="4">
    <source ref="3"/>
</evidence>
<evidence type="ECO:0000305" key="5"/>
<evidence type="ECO:0007829" key="6">
    <source>
        <dbReference type="PDB" id="5EKA"/>
    </source>
</evidence>
<gene>
    <name type="ordered locus">TTHA1349</name>
</gene>
<proteinExistence type="evidence at protein level"/>
<reference key="1">
    <citation type="journal article" date="1990" name="FEBS Lett.">
        <title>The primary structure of DNA binding protein II from the extreme thermophilic bacterium Thermus thermophilus.</title>
        <authorList>
            <person name="Zierer R."/>
            <person name="Choli D."/>
        </authorList>
    </citation>
    <scope>PROTEIN SEQUENCE</scope>
</reference>
<reference key="2">
    <citation type="submission" date="2004-11" db="EMBL/GenBank/DDBJ databases">
        <title>Complete genome sequence of Thermus thermophilus HB8.</title>
        <authorList>
            <person name="Masui R."/>
            <person name="Kurokawa K."/>
            <person name="Nakagawa N."/>
            <person name="Tokunaga F."/>
            <person name="Koyama Y."/>
            <person name="Shibata T."/>
            <person name="Oshima T."/>
            <person name="Yokoyama S."/>
            <person name="Yasunaga T."/>
            <person name="Kuramitsu S."/>
        </authorList>
    </citation>
    <scope>NUCLEOTIDE SEQUENCE [LARGE SCALE GENOMIC DNA]</scope>
    <source>
        <strain>ATCC 27634 / DSM 579 / HB8</strain>
    </source>
</reference>
<reference key="3">
    <citation type="journal article" date="1996" name="Endocyt. Cell Res.">
        <title>Identification, pruification and partial sequence of four Thermus thermophilus 5S rRNA binding proteins.</title>
        <authorList>
            <person name="Kim J.-S."/>
            <person name="Boysen R.I."/>
            <person name="Schroeder W."/>
            <person name="Erdmann V.A."/>
            <person name="Gessner R.V."/>
        </authorList>
    </citation>
    <scope>PROTEIN SEQUENCE OF 2-60</scope>
    <scope>ISOLATION OF 5S RRNA-ASSOCIATED COMPLEXES</scope>
</reference>
<name>DBH_THET8</name>
<feature type="initiator methionine" description="Removed" evidence="1 2">
    <location>
        <position position="1"/>
    </location>
</feature>
<feature type="chain" id="PRO_0000104990" description="DNA-binding protein HU">
    <location>
        <begin position="2"/>
        <end position="97"/>
    </location>
</feature>
<feature type="sequence conflict" description="In Ref. 3; AA sequence." evidence="5" ref="3">
    <original>K</original>
    <variation>L</variation>
    <location>
        <position position="9"/>
    </location>
</feature>
<feature type="sequence conflict" description="In Ref. 1; AA sequence." evidence="5" ref="1">
    <original>KK</original>
    <variation>LL</variation>
    <location>
        <begin position="24"/>
        <end position="25"/>
    </location>
</feature>
<feature type="sequence conflict" description="In Ref. 1; AA sequence." evidence="5" ref="1">
    <location>
        <position position="97"/>
    </location>
</feature>
<feature type="helix" evidence="6">
    <location>
        <begin position="9"/>
        <end position="20"/>
    </location>
</feature>
<feature type="helix" evidence="6">
    <location>
        <begin position="24"/>
        <end position="43"/>
    </location>
</feature>
<feature type="strand" evidence="6">
    <location>
        <begin position="48"/>
        <end position="50"/>
    </location>
</feature>
<feature type="turn" evidence="6">
    <location>
        <begin position="51"/>
        <end position="53"/>
    </location>
</feature>
<feature type="strand" evidence="6">
    <location>
        <begin position="54"/>
        <end position="61"/>
    </location>
</feature>
<feature type="strand" evidence="6">
    <location>
        <begin position="80"/>
        <end position="87"/>
    </location>
</feature>
<feature type="helix" evidence="6">
    <location>
        <begin position="89"/>
        <end position="95"/>
    </location>
</feature>
<comment type="function">
    <text>Histone-like DNA-binding protein which is capable of wrapping DNA to stabilize it, and thus to prevent its denaturation under extreme environmental conditions.</text>
</comment>
<comment type="subunit">
    <text evidence="2">Has been isolated in complexes with 5S rRNA and bL25, and with 5S rRNA, bL25 and uL5 (Ref.3). Homodimer.</text>
</comment>
<comment type="similarity">
    <text evidence="5">Belongs to the bacterial histone-like protein family.</text>
</comment>
<accession>P19436</accession>
<accession>Q5SIM0</accession>